<sequence>MAKIDLSNFDKIIVLDFGSQYNQLITRRIRDFGIYSELLPHTITAEEVKKIAPKGIIFSGGPNSVYDENALDVDPEIFELGIPILGICYGMQLMTQKLGGTVEKAGEAEYGSAHIEVKEADSPLYKGLPEKQVVWMSHGDLVTKVPEGFEVLASSKNCPIASMADPDRKFYAVQFHAEVRNSEYGLDILRRFAFDVCGAKDNWTMDDFIKLSVDSIREEVGNANVILGISGGVDSSVTATLLHKAIGSQLTAIFVDHGLLRKNESDEVMAALKEGLGVNIVRVDAKDRFMSKLAGVTDPEKKRKIIGNEFVQVFNDEAKKIKDAKFLAQGTLYTDVIESGTDTAHTIKSHHNVGGLPEDMQFKLIEPLRQLFKDEVRVLGEKLGLPHDLVWRQPFPGPGLAIRVIGEITEEKLRIVRDADAILREEVKNAGLQESIWQYFVALPGMRSVGVMGDGRTYDYAVCIRAVTSIDGMTADFAQIPWDVLQKISVRIVNEVKQVNRVLYDVTSKPPATIEYE</sequence>
<gene>
    <name evidence="1" type="primary">guaA</name>
    <name type="ordered locus">LBUL_0252</name>
</gene>
<name>GUAA_LACDB</name>
<organism>
    <name type="scientific">Lactobacillus delbrueckii subsp. bulgaricus (strain ATCC BAA-365 / Lb-18)</name>
    <dbReference type="NCBI Taxonomy" id="321956"/>
    <lineage>
        <taxon>Bacteria</taxon>
        <taxon>Bacillati</taxon>
        <taxon>Bacillota</taxon>
        <taxon>Bacilli</taxon>
        <taxon>Lactobacillales</taxon>
        <taxon>Lactobacillaceae</taxon>
        <taxon>Lactobacillus</taxon>
    </lineage>
</organism>
<keyword id="KW-0067">ATP-binding</keyword>
<keyword id="KW-0315">Glutamine amidotransferase</keyword>
<keyword id="KW-0332">GMP biosynthesis</keyword>
<keyword id="KW-0436">Ligase</keyword>
<keyword id="KW-0547">Nucleotide-binding</keyword>
<keyword id="KW-0658">Purine biosynthesis</keyword>
<accession>Q04CA4</accession>
<comment type="function">
    <text evidence="1">Catalyzes the synthesis of GMP from XMP.</text>
</comment>
<comment type="catalytic activity">
    <reaction evidence="1">
        <text>XMP + L-glutamine + ATP + H2O = GMP + L-glutamate + AMP + diphosphate + 2 H(+)</text>
        <dbReference type="Rhea" id="RHEA:11680"/>
        <dbReference type="ChEBI" id="CHEBI:15377"/>
        <dbReference type="ChEBI" id="CHEBI:15378"/>
        <dbReference type="ChEBI" id="CHEBI:29985"/>
        <dbReference type="ChEBI" id="CHEBI:30616"/>
        <dbReference type="ChEBI" id="CHEBI:33019"/>
        <dbReference type="ChEBI" id="CHEBI:57464"/>
        <dbReference type="ChEBI" id="CHEBI:58115"/>
        <dbReference type="ChEBI" id="CHEBI:58359"/>
        <dbReference type="ChEBI" id="CHEBI:456215"/>
        <dbReference type="EC" id="6.3.5.2"/>
    </reaction>
</comment>
<comment type="pathway">
    <text evidence="1">Purine metabolism; GMP biosynthesis; GMP from XMP (L-Gln route): step 1/1.</text>
</comment>
<comment type="subunit">
    <text evidence="1">Homodimer.</text>
</comment>
<reference key="1">
    <citation type="journal article" date="2006" name="Proc. Natl. Acad. Sci. U.S.A.">
        <title>Comparative genomics of the lactic acid bacteria.</title>
        <authorList>
            <person name="Makarova K.S."/>
            <person name="Slesarev A."/>
            <person name="Wolf Y.I."/>
            <person name="Sorokin A."/>
            <person name="Mirkin B."/>
            <person name="Koonin E.V."/>
            <person name="Pavlov A."/>
            <person name="Pavlova N."/>
            <person name="Karamychev V."/>
            <person name="Polouchine N."/>
            <person name="Shakhova V."/>
            <person name="Grigoriev I."/>
            <person name="Lou Y."/>
            <person name="Rohksar D."/>
            <person name="Lucas S."/>
            <person name="Huang K."/>
            <person name="Goodstein D.M."/>
            <person name="Hawkins T."/>
            <person name="Plengvidhya V."/>
            <person name="Welker D."/>
            <person name="Hughes J."/>
            <person name="Goh Y."/>
            <person name="Benson A."/>
            <person name="Baldwin K."/>
            <person name="Lee J.-H."/>
            <person name="Diaz-Muniz I."/>
            <person name="Dosti B."/>
            <person name="Smeianov V."/>
            <person name="Wechter W."/>
            <person name="Barabote R."/>
            <person name="Lorca G."/>
            <person name="Altermann E."/>
            <person name="Barrangou R."/>
            <person name="Ganesan B."/>
            <person name="Xie Y."/>
            <person name="Rawsthorne H."/>
            <person name="Tamir D."/>
            <person name="Parker C."/>
            <person name="Breidt F."/>
            <person name="Broadbent J.R."/>
            <person name="Hutkins R."/>
            <person name="O'Sullivan D."/>
            <person name="Steele J."/>
            <person name="Unlu G."/>
            <person name="Saier M.H. Jr."/>
            <person name="Klaenhammer T."/>
            <person name="Richardson P."/>
            <person name="Kozyavkin S."/>
            <person name="Weimer B.C."/>
            <person name="Mills D.A."/>
        </authorList>
    </citation>
    <scope>NUCLEOTIDE SEQUENCE [LARGE SCALE GENOMIC DNA]</scope>
    <source>
        <strain>ATCC BAA-365 / Lb-18</strain>
    </source>
</reference>
<evidence type="ECO:0000255" key="1">
    <source>
        <dbReference type="HAMAP-Rule" id="MF_00344"/>
    </source>
</evidence>
<proteinExistence type="inferred from homology"/>
<protein>
    <recommendedName>
        <fullName evidence="1">GMP synthase [glutamine-hydrolyzing]</fullName>
        <ecNumber evidence="1">6.3.5.2</ecNumber>
    </recommendedName>
    <alternativeName>
        <fullName evidence="1">GMP synthetase</fullName>
    </alternativeName>
    <alternativeName>
        <fullName evidence="1">Glutamine amidotransferase</fullName>
    </alternativeName>
</protein>
<dbReference type="EC" id="6.3.5.2" evidence="1"/>
<dbReference type="EMBL" id="CP000412">
    <property type="protein sequence ID" value="ABJ57918.1"/>
    <property type="molecule type" value="Genomic_DNA"/>
</dbReference>
<dbReference type="RefSeq" id="WP_003619442.1">
    <property type="nucleotide sequence ID" value="NC_008529.1"/>
</dbReference>
<dbReference type="SMR" id="Q04CA4"/>
<dbReference type="MEROPS" id="C26.957"/>
<dbReference type="KEGG" id="lbu:LBUL_0252"/>
<dbReference type="HOGENOM" id="CLU_014340_0_5_9"/>
<dbReference type="BioCyc" id="LDEL321956:LBUL_RS01170-MONOMER"/>
<dbReference type="UniPathway" id="UPA00189">
    <property type="reaction ID" value="UER00296"/>
</dbReference>
<dbReference type="GO" id="GO:0005829">
    <property type="term" value="C:cytosol"/>
    <property type="evidence" value="ECO:0007669"/>
    <property type="project" value="TreeGrafter"/>
</dbReference>
<dbReference type="GO" id="GO:0005524">
    <property type="term" value="F:ATP binding"/>
    <property type="evidence" value="ECO:0007669"/>
    <property type="project" value="UniProtKB-UniRule"/>
</dbReference>
<dbReference type="GO" id="GO:0003921">
    <property type="term" value="F:GMP synthase activity"/>
    <property type="evidence" value="ECO:0007669"/>
    <property type="project" value="InterPro"/>
</dbReference>
<dbReference type="CDD" id="cd01742">
    <property type="entry name" value="GATase1_GMP_Synthase"/>
    <property type="match status" value="1"/>
</dbReference>
<dbReference type="CDD" id="cd01997">
    <property type="entry name" value="GMP_synthase_C"/>
    <property type="match status" value="1"/>
</dbReference>
<dbReference type="FunFam" id="3.30.300.10:FF:000002">
    <property type="entry name" value="GMP synthase [glutamine-hydrolyzing]"/>
    <property type="match status" value="1"/>
</dbReference>
<dbReference type="FunFam" id="3.40.50.620:FF:000001">
    <property type="entry name" value="GMP synthase [glutamine-hydrolyzing]"/>
    <property type="match status" value="1"/>
</dbReference>
<dbReference type="FunFam" id="3.40.50.880:FF:000001">
    <property type="entry name" value="GMP synthase [glutamine-hydrolyzing]"/>
    <property type="match status" value="1"/>
</dbReference>
<dbReference type="Gene3D" id="3.30.300.10">
    <property type="match status" value="1"/>
</dbReference>
<dbReference type="Gene3D" id="3.40.50.880">
    <property type="match status" value="1"/>
</dbReference>
<dbReference type="Gene3D" id="3.40.50.620">
    <property type="entry name" value="HUPs"/>
    <property type="match status" value="1"/>
</dbReference>
<dbReference type="HAMAP" id="MF_00344">
    <property type="entry name" value="GMP_synthase"/>
    <property type="match status" value="1"/>
</dbReference>
<dbReference type="InterPro" id="IPR029062">
    <property type="entry name" value="Class_I_gatase-like"/>
</dbReference>
<dbReference type="InterPro" id="IPR017926">
    <property type="entry name" value="GATASE"/>
</dbReference>
<dbReference type="InterPro" id="IPR001674">
    <property type="entry name" value="GMP_synth_C"/>
</dbReference>
<dbReference type="InterPro" id="IPR004739">
    <property type="entry name" value="GMP_synth_GATase"/>
</dbReference>
<dbReference type="InterPro" id="IPR022955">
    <property type="entry name" value="GMP_synthase"/>
</dbReference>
<dbReference type="InterPro" id="IPR025777">
    <property type="entry name" value="GMPS_ATP_PPase_dom"/>
</dbReference>
<dbReference type="InterPro" id="IPR022310">
    <property type="entry name" value="NAD/GMP_synthase"/>
</dbReference>
<dbReference type="InterPro" id="IPR014729">
    <property type="entry name" value="Rossmann-like_a/b/a_fold"/>
</dbReference>
<dbReference type="NCBIfam" id="TIGR00884">
    <property type="entry name" value="guaA_Cterm"/>
    <property type="match status" value="1"/>
</dbReference>
<dbReference type="NCBIfam" id="TIGR00888">
    <property type="entry name" value="guaA_Nterm"/>
    <property type="match status" value="1"/>
</dbReference>
<dbReference type="NCBIfam" id="NF000848">
    <property type="entry name" value="PRK00074.1"/>
    <property type="match status" value="1"/>
</dbReference>
<dbReference type="PANTHER" id="PTHR11922:SF2">
    <property type="entry name" value="GMP SYNTHASE [GLUTAMINE-HYDROLYZING]"/>
    <property type="match status" value="1"/>
</dbReference>
<dbReference type="PANTHER" id="PTHR11922">
    <property type="entry name" value="GMP SYNTHASE-RELATED"/>
    <property type="match status" value="1"/>
</dbReference>
<dbReference type="Pfam" id="PF00117">
    <property type="entry name" value="GATase"/>
    <property type="match status" value="1"/>
</dbReference>
<dbReference type="Pfam" id="PF00958">
    <property type="entry name" value="GMP_synt_C"/>
    <property type="match status" value="1"/>
</dbReference>
<dbReference type="Pfam" id="PF02540">
    <property type="entry name" value="NAD_synthase"/>
    <property type="match status" value="1"/>
</dbReference>
<dbReference type="PRINTS" id="PR00099">
    <property type="entry name" value="CPSGATASE"/>
</dbReference>
<dbReference type="PRINTS" id="PR00096">
    <property type="entry name" value="GATASE"/>
</dbReference>
<dbReference type="SUPFAM" id="SSF52402">
    <property type="entry name" value="Adenine nucleotide alpha hydrolases-like"/>
    <property type="match status" value="1"/>
</dbReference>
<dbReference type="SUPFAM" id="SSF52317">
    <property type="entry name" value="Class I glutamine amidotransferase-like"/>
    <property type="match status" value="1"/>
</dbReference>
<dbReference type="PROSITE" id="PS51273">
    <property type="entry name" value="GATASE_TYPE_1"/>
    <property type="match status" value="1"/>
</dbReference>
<dbReference type="PROSITE" id="PS51553">
    <property type="entry name" value="GMPS_ATP_PPASE"/>
    <property type="match status" value="1"/>
</dbReference>
<feature type="chain" id="PRO_1000120327" description="GMP synthase [glutamine-hydrolyzing]">
    <location>
        <begin position="1"/>
        <end position="517"/>
    </location>
</feature>
<feature type="domain" description="Glutamine amidotransferase type-1" evidence="1">
    <location>
        <begin position="11"/>
        <end position="202"/>
    </location>
</feature>
<feature type="domain" description="GMPS ATP-PPase" evidence="1">
    <location>
        <begin position="203"/>
        <end position="392"/>
    </location>
</feature>
<feature type="active site" description="Nucleophile" evidence="1">
    <location>
        <position position="88"/>
    </location>
</feature>
<feature type="active site" evidence="1">
    <location>
        <position position="176"/>
    </location>
</feature>
<feature type="active site" evidence="1">
    <location>
        <position position="178"/>
    </location>
</feature>
<feature type="binding site" evidence="1">
    <location>
        <begin position="230"/>
        <end position="236"/>
    </location>
    <ligand>
        <name>ATP</name>
        <dbReference type="ChEBI" id="CHEBI:30616"/>
    </ligand>
</feature>